<accession>A1VZ24</accession>
<feature type="chain" id="PRO_1000000389" description="Argininosuccinate synthase">
    <location>
        <begin position="1"/>
        <end position="406"/>
    </location>
</feature>
<feature type="binding site" evidence="1">
    <location>
        <begin position="11"/>
        <end position="19"/>
    </location>
    <ligand>
        <name>ATP</name>
        <dbReference type="ChEBI" id="CHEBI:30616"/>
    </ligand>
</feature>
<feature type="binding site" evidence="1">
    <location>
        <position position="38"/>
    </location>
    <ligand>
        <name>ATP</name>
        <dbReference type="ChEBI" id="CHEBI:30616"/>
    </ligand>
</feature>
<feature type="binding site" evidence="1">
    <location>
        <position position="91"/>
    </location>
    <ligand>
        <name>L-citrulline</name>
        <dbReference type="ChEBI" id="CHEBI:57743"/>
    </ligand>
</feature>
<feature type="binding site" evidence="1">
    <location>
        <position position="96"/>
    </location>
    <ligand>
        <name>L-citrulline</name>
        <dbReference type="ChEBI" id="CHEBI:57743"/>
    </ligand>
</feature>
<feature type="binding site" evidence="1">
    <location>
        <position position="121"/>
    </location>
    <ligand>
        <name>ATP</name>
        <dbReference type="ChEBI" id="CHEBI:30616"/>
    </ligand>
</feature>
<feature type="binding site" evidence="1">
    <location>
        <position position="123"/>
    </location>
    <ligand>
        <name>L-aspartate</name>
        <dbReference type="ChEBI" id="CHEBI:29991"/>
    </ligand>
</feature>
<feature type="binding site" evidence="1">
    <location>
        <position position="127"/>
    </location>
    <ligand>
        <name>L-aspartate</name>
        <dbReference type="ChEBI" id="CHEBI:29991"/>
    </ligand>
</feature>
<feature type="binding site" evidence="1">
    <location>
        <position position="127"/>
    </location>
    <ligand>
        <name>L-citrulline</name>
        <dbReference type="ChEBI" id="CHEBI:57743"/>
    </ligand>
</feature>
<feature type="binding site" evidence="1">
    <location>
        <position position="128"/>
    </location>
    <ligand>
        <name>L-aspartate</name>
        <dbReference type="ChEBI" id="CHEBI:29991"/>
    </ligand>
</feature>
<feature type="binding site" evidence="1">
    <location>
        <position position="131"/>
    </location>
    <ligand>
        <name>L-citrulline</name>
        <dbReference type="ChEBI" id="CHEBI:57743"/>
    </ligand>
</feature>
<feature type="binding site" evidence="1">
    <location>
        <position position="181"/>
    </location>
    <ligand>
        <name>L-citrulline</name>
        <dbReference type="ChEBI" id="CHEBI:57743"/>
    </ligand>
</feature>
<feature type="binding site" evidence="1">
    <location>
        <position position="190"/>
    </location>
    <ligand>
        <name>L-citrulline</name>
        <dbReference type="ChEBI" id="CHEBI:57743"/>
    </ligand>
</feature>
<feature type="binding site" evidence="1">
    <location>
        <position position="266"/>
    </location>
    <ligand>
        <name>L-citrulline</name>
        <dbReference type="ChEBI" id="CHEBI:57743"/>
    </ligand>
</feature>
<feature type="binding site" evidence="1">
    <location>
        <position position="278"/>
    </location>
    <ligand>
        <name>L-citrulline</name>
        <dbReference type="ChEBI" id="CHEBI:57743"/>
    </ligand>
</feature>
<proteinExistence type="inferred from homology"/>
<gene>
    <name evidence="1" type="primary">argG</name>
    <name type="ordered locus">CJJ81176_0692</name>
</gene>
<organism>
    <name type="scientific">Campylobacter jejuni subsp. jejuni serotype O:23/36 (strain 81-176)</name>
    <dbReference type="NCBI Taxonomy" id="354242"/>
    <lineage>
        <taxon>Bacteria</taxon>
        <taxon>Pseudomonadati</taxon>
        <taxon>Campylobacterota</taxon>
        <taxon>Epsilonproteobacteria</taxon>
        <taxon>Campylobacterales</taxon>
        <taxon>Campylobacteraceae</taxon>
        <taxon>Campylobacter</taxon>
    </lineage>
</organism>
<keyword id="KW-0028">Amino-acid biosynthesis</keyword>
<keyword id="KW-0055">Arginine biosynthesis</keyword>
<keyword id="KW-0067">ATP-binding</keyword>
<keyword id="KW-0963">Cytoplasm</keyword>
<keyword id="KW-0436">Ligase</keyword>
<keyword id="KW-0547">Nucleotide-binding</keyword>
<evidence type="ECO:0000255" key="1">
    <source>
        <dbReference type="HAMAP-Rule" id="MF_00005"/>
    </source>
</evidence>
<reference key="1">
    <citation type="submission" date="2006-12" db="EMBL/GenBank/DDBJ databases">
        <authorList>
            <person name="Fouts D.E."/>
            <person name="Nelson K.E."/>
            <person name="Sebastian Y."/>
        </authorList>
    </citation>
    <scope>NUCLEOTIDE SEQUENCE [LARGE SCALE GENOMIC DNA]</scope>
    <source>
        <strain>81-176</strain>
    </source>
</reference>
<comment type="catalytic activity">
    <reaction evidence="1">
        <text>L-citrulline + L-aspartate + ATP = 2-(N(omega)-L-arginino)succinate + AMP + diphosphate + H(+)</text>
        <dbReference type="Rhea" id="RHEA:10932"/>
        <dbReference type="ChEBI" id="CHEBI:15378"/>
        <dbReference type="ChEBI" id="CHEBI:29991"/>
        <dbReference type="ChEBI" id="CHEBI:30616"/>
        <dbReference type="ChEBI" id="CHEBI:33019"/>
        <dbReference type="ChEBI" id="CHEBI:57472"/>
        <dbReference type="ChEBI" id="CHEBI:57743"/>
        <dbReference type="ChEBI" id="CHEBI:456215"/>
        <dbReference type="EC" id="6.3.4.5"/>
    </reaction>
</comment>
<comment type="pathway">
    <text evidence="1">Amino-acid biosynthesis; L-arginine biosynthesis; L-arginine from L-ornithine and carbamoyl phosphate: step 2/3.</text>
</comment>
<comment type="subunit">
    <text evidence="1">Homotetramer.</text>
</comment>
<comment type="subcellular location">
    <subcellularLocation>
        <location evidence="1">Cytoplasm</location>
    </subcellularLocation>
</comment>
<comment type="similarity">
    <text evidence="1">Belongs to the argininosuccinate synthase family. Type 1 subfamily.</text>
</comment>
<dbReference type="EC" id="6.3.4.5" evidence="1"/>
<dbReference type="EMBL" id="CP000538">
    <property type="protein sequence ID" value="EAQ72440.1"/>
    <property type="molecule type" value="Genomic_DNA"/>
</dbReference>
<dbReference type="RefSeq" id="WP_002854869.1">
    <property type="nucleotide sequence ID" value="NC_008787.1"/>
</dbReference>
<dbReference type="SMR" id="A1VZ24"/>
<dbReference type="KEGG" id="cjj:CJJ81176_0692"/>
<dbReference type="eggNOG" id="COG0137">
    <property type="taxonomic scope" value="Bacteria"/>
</dbReference>
<dbReference type="HOGENOM" id="CLU_032784_4_2_7"/>
<dbReference type="UniPathway" id="UPA00068">
    <property type="reaction ID" value="UER00113"/>
</dbReference>
<dbReference type="Proteomes" id="UP000000646">
    <property type="component" value="Chromosome"/>
</dbReference>
<dbReference type="GO" id="GO:0005737">
    <property type="term" value="C:cytoplasm"/>
    <property type="evidence" value="ECO:0007669"/>
    <property type="project" value="UniProtKB-SubCell"/>
</dbReference>
<dbReference type="GO" id="GO:0004055">
    <property type="term" value="F:argininosuccinate synthase activity"/>
    <property type="evidence" value="ECO:0007669"/>
    <property type="project" value="UniProtKB-UniRule"/>
</dbReference>
<dbReference type="GO" id="GO:0005524">
    <property type="term" value="F:ATP binding"/>
    <property type="evidence" value="ECO:0007669"/>
    <property type="project" value="UniProtKB-UniRule"/>
</dbReference>
<dbReference type="GO" id="GO:0000053">
    <property type="term" value="P:argininosuccinate metabolic process"/>
    <property type="evidence" value="ECO:0007669"/>
    <property type="project" value="TreeGrafter"/>
</dbReference>
<dbReference type="GO" id="GO:0006526">
    <property type="term" value="P:L-arginine biosynthetic process"/>
    <property type="evidence" value="ECO:0007669"/>
    <property type="project" value="UniProtKB-UniRule"/>
</dbReference>
<dbReference type="GO" id="GO:0000050">
    <property type="term" value="P:urea cycle"/>
    <property type="evidence" value="ECO:0007669"/>
    <property type="project" value="TreeGrafter"/>
</dbReference>
<dbReference type="CDD" id="cd01999">
    <property type="entry name" value="ASS"/>
    <property type="match status" value="1"/>
</dbReference>
<dbReference type="FunFam" id="3.40.50.620:FF:000019">
    <property type="entry name" value="Argininosuccinate synthase"/>
    <property type="match status" value="1"/>
</dbReference>
<dbReference type="FunFam" id="3.90.1260.10:FF:000007">
    <property type="entry name" value="Argininosuccinate synthase"/>
    <property type="match status" value="1"/>
</dbReference>
<dbReference type="Gene3D" id="3.90.1260.10">
    <property type="entry name" value="Argininosuccinate synthetase, chain A, domain 2"/>
    <property type="match status" value="1"/>
</dbReference>
<dbReference type="Gene3D" id="3.40.50.620">
    <property type="entry name" value="HUPs"/>
    <property type="match status" value="1"/>
</dbReference>
<dbReference type="Gene3D" id="1.20.5.470">
    <property type="entry name" value="Single helix bin"/>
    <property type="match status" value="1"/>
</dbReference>
<dbReference type="HAMAP" id="MF_00005">
    <property type="entry name" value="Arg_succ_synth_type1"/>
    <property type="match status" value="1"/>
</dbReference>
<dbReference type="InterPro" id="IPR048268">
    <property type="entry name" value="Arginosuc_syn_C"/>
</dbReference>
<dbReference type="InterPro" id="IPR048267">
    <property type="entry name" value="Arginosuc_syn_N"/>
</dbReference>
<dbReference type="InterPro" id="IPR001518">
    <property type="entry name" value="Arginosuc_synth"/>
</dbReference>
<dbReference type="InterPro" id="IPR018223">
    <property type="entry name" value="Arginosuc_synth_CS"/>
</dbReference>
<dbReference type="InterPro" id="IPR023434">
    <property type="entry name" value="Arginosuc_synth_type_1_subfam"/>
</dbReference>
<dbReference type="InterPro" id="IPR024074">
    <property type="entry name" value="AS_cat/multimer_dom_body"/>
</dbReference>
<dbReference type="InterPro" id="IPR014729">
    <property type="entry name" value="Rossmann-like_a/b/a_fold"/>
</dbReference>
<dbReference type="NCBIfam" id="TIGR00032">
    <property type="entry name" value="argG"/>
    <property type="match status" value="1"/>
</dbReference>
<dbReference type="NCBIfam" id="NF001770">
    <property type="entry name" value="PRK00509.1"/>
    <property type="match status" value="1"/>
</dbReference>
<dbReference type="PANTHER" id="PTHR11587">
    <property type="entry name" value="ARGININOSUCCINATE SYNTHASE"/>
    <property type="match status" value="1"/>
</dbReference>
<dbReference type="PANTHER" id="PTHR11587:SF2">
    <property type="entry name" value="ARGININOSUCCINATE SYNTHASE"/>
    <property type="match status" value="1"/>
</dbReference>
<dbReference type="Pfam" id="PF20979">
    <property type="entry name" value="Arginosuc_syn_C"/>
    <property type="match status" value="1"/>
</dbReference>
<dbReference type="Pfam" id="PF00764">
    <property type="entry name" value="Arginosuc_synth"/>
    <property type="match status" value="1"/>
</dbReference>
<dbReference type="SUPFAM" id="SSF52402">
    <property type="entry name" value="Adenine nucleotide alpha hydrolases-like"/>
    <property type="match status" value="1"/>
</dbReference>
<dbReference type="SUPFAM" id="SSF69864">
    <property type="entry name" value="Argininosuccinate synthetase, C-terminal domain"/>
    <property type="match status" value="1"/>
</dbReference>
<dbReference type="PROSITE" id="PS00564">
    <property type="entry name" value="ARGININOSUCCIN_SYN_1"/>
    <property type="match status" value="1"/>
</dbReference>
<dbReference type="PROSITE" id="PS00565">
    <property type="entry name" value="ARGININOSUCCIN_SYN_2"/>
    <property type="match status" value="1"/>
</dbReference>
<protein>
    <recommendedName>
        <fullName evidence="1">Argininosuccinate synthase</fullName>
        <ecNumber evidence="1">6.3.4.5</ecNumber>
    </recommendedName>
    <alternativeName>
        <fullName evidence="1">Citrulline--aspartate ligase</fullName>
    </alternativeName>
</protein>
<sequence>MKNEVKKVVLAYSGGLDTSIILKWLQDEYNCEVVTFTADIGQGEELEPARKKALSLGIKEENIFIKDLRDEFVKDYVFPMFRANAIYEGEYLLGTSIARPLIAKTQAQIALQTGADAVSHGATGKGNDQVRFELGYLAFNPDLKIIAPWREWDLNSREKLLAYAQKHGIDISKKKGKSPYSMDANLLHISYEGLVLEDPAHAPEEDMWRWSKSPKDAPNESEIIELDFQKGDLVAINGEKLSPAGLLTKLNELGCKHGIGRLDIVENRYVGMKSRGCYETPGGTILLKAHRALESITLDREAAHLKDELMPKYASLIYNGYWFSPERMMLQALIDESQIHANGRVKLELYKGNVMVIGRESANDSLFNAAYCTFEEDEVYNQKDAAGFIKLNALRFIIAGKNGRKF</sequence>
<name>ASSY_CAMJJ</name>